<reference key="1">
    <citation type="journal article" date="2005" name="J. Bacteriol.">
        <title>Whole-genome sequence analysis of Pseudomonas syringae pv. phaseolicola 1448A reveals divergence among pathovars in genes involved in virulence and transposition.</title>
        <authorList>
            <person name="Joardar V."/>
            <person name="Lindeberg M."/>
            <person name="Jackson R.W."/>
            <person name="Selengut J."/>
            <person name="Dodson R."/>
            <person name="Brinkac L.M."/>
            <person name="Daugherty S.C."/>
            <person name="DeBoy R.T."/>
            <person name="Durkin A.S."/>
            <person name="Gwinn Giglio M."/>
            <person name="Madupu R."/>
            <person name="Nelson W.C."/>
            <person name="Rosovitz M.J."/>
            <person name="Sullivan S.A."/>
            <person name="Crabtree J."/>
            <person name="Creasy T."/>
            <person name="Davidsen T.M."/>
            <person name="Haft D.H."/>
            <person name="Zafar N."/>
            <person name="Zhou L."/>
            <person name="Halpin R."/>
            <person name="Holley T."/>
            <person name="Khouri H.M."/>
            <person name="Feldblyum T.V."/>
            <person name="White O."/>
            <person name="Fraser C.M."/>
            <person name="Chatterjee A.K."/>
            <person name="Cartinhour S."/>
            <person name="Schneider D."/>
            <person name="Mansfield J.W."/>
            <person name="Collmer A."/>
            <person name="Buell R."/>
        </authorList>
    </citation>
    <scope>NUCLEOTIDE SEQUENCE [LARGE SCALE GENOMIC DNA]</scope>
    <source>
        <strain>1448A / Race 6</strain>
    </source>
</reference>
<keyword id="KW-0010">Activator</keyword>
<keyword id="KW-0067">ATP-binding</keyword>
<keyword id="KW-0238">DNA-binding</keyword>
<keyword id="KW-0347">Helicase</keyword>
<keyword id="KW-0378">Hydrolase</keyword>
<keyword id="KW-0547">Nucleotide-binding</keyword>
<keyword id="KW-0804">Transcription</keyword>
<keyword id="KW-0805">Transcription regulation</keyword>
<comment type="function">
    <text evidence="1">Transcription regulator that activates transcription by stimulating RNA polymerase (RNAP) recycling in case of stress conditions such as supercoiled DNA or high salt concentrations. Probably acts by releasing the RNAP, when it is trapped or immobilized on tightly supercoiled DNA. Does not activate transcription on linear DNA. Probably not involved in DNA repair.</text>
</comment>
<comment type="subunit">
    <text evidence="1">Interacts with the RNAP. Has a higher affinity for the core RNAP than for the holoenzyme. Its ATPase activity is stimulated by binding to RNAP.</text>
</comment>
<comment type="similarity">
    <text evidence="1">Belongs to the SNF2/RAD54 helicase family. RapA subfamily.</text>
</comment>
<proteinExistence type="inferred from homology"/>
<organism>
    <name type="scientific">Pseudomonas savastanoi pv. phaseolicola (strain 1448A / Race 6)</name>
    <name type="common">Pseudomonas syringae pv. phaseolicola (strain 1448A / Race 6)</name>
    <dbReference type="NCBI Taxonomy" id="264730"/>
    <lineage>
        <taxon>Bacteria</taxon>
        <taxon>Pseudomonadati</taxon>
        <taxon>Pseudomonadota</taxon>
        <taxon>Gammaproteobacteria</taxon>
        <taxon>Pseudomonadales</taxon>
        <taxon>Pseudomonadaceae</taxon>
        <taxon>Pseudomonas</taxon>
    </lineage>
</organism>
<accession>Q48LP5</accession>
<gene>
    <name evidence="1" type="primary">rapA</name>
    <name type="ordered locus">PSPPH_1421</name>
</gene>
<sequence>MAQQYQPGQRWISDSEAELGLGTVLAQDGRLLTVLYPATGETRQYALRNAPLTRVRFSPGDVITHFENWKMTVREVDDVDGLLVYHGLNAQNEVVTLPETQLSNFIQFRLATDRLFAGQIDQLSWFSLRYNTLEHTSRQLQSSLWGLGGVRAQPIAHQLHIAREVADRIAPRVLLADEVGLGKTIEAGLVIHRQLLSGRASRVLILVPENLQHQWLVEMRRRFNLQVALFDAERFMESDAGNPFEDTQLALVALEWLVEDEKAQDALFAAGWDLMVVDEAHHLVWHEDKASREYSLVEQLAEVIAGVLLLTATPEQLGQDSHFARLRLLDPNRFHDLKAFRAESENYRPVAQAVQELLDKGKLSAEAQETIHGFLGAEGDSLLAAVNTGDDEAKARLIRELLDRHGTGRVLFRNTRAAVQGFPERKLHQYPLPCPVEYLELPVGEHADLYPEVSFQSQPEVSEEERWWRFDPRVDWLIDTLKMLKRVKVLVICAHAETAMDLEDALRVRSGIPATVFHEGMNILERDRAAAYFADEEFGAQVLICSEIGSEGRNFQFSHHLVLFDLPSHPDLLEQRIGRLDRIGQKHTIELHVPFLETSPQARLFQWYHEALNAFLNTCPTGNALQHQFGPRLLPLLESGDDDEWQSLIDEARTERERLESELHTGRDRLLELNSGGAGEGEALVEAILEQDDQFSLPIYMETLFDAFGIDSEDHSENALILKPSEKMLDASFPLGDDEGVTITYDRNQALSREDMQFITWEHPMVQGGMDLVRSGSMGNTAVALIKNKALKPGTVLLELIYVSEVVAPRSLQLGRYLPPAALRCLLDANGNDLSSRVSFNTLNDQLESVPRASANKFIQAQRDQLTPRINAGEEKITPRHAERVAEAQRRLAADTEEELARLTALQAVNPTVRDSELVALRSQREQGLAMLEKAALRLEAIRVLVAG</sequence>
<name>RAPA_PSE14</name>
<protein>
    <recommendedName>
        <fullName evidence="1">RNA polymerase-associated protein RapA</fullName>
        <ecNumber evidence="1">3.6.4.-</ecNumber>
    </recommendedName>
    <alternativeName>
        <fullName evidence="1">ATP-dependent helicase HepA</fullName>
    </alternativeName>
</protein>
<feature type="chain" id="PRO_1000088364" description="RNA polymerase-associated protein RapA">
    <location>
        <begin position="1"/>
        <end position="948"/>
    </location>
</feature>
<feature type="domain" description="Helicase ATP-binding" evidence="1">
    <location>
        <begin position="164"/>
        <end position="332"/>
    </location>
</feature>
<feature type="domain" description="Helicase C-terminal" evidence="1">
    <location>
        <begin position="473"/>
        <end position="627"/>
    </location>
</feature>
<feature type="short sequence motif" description="DEAH box">
    <location>
        <begin position="278"/>
        <end position="281"/>
    </location>
</feature>
<feature type="binding site" evidence="1">
    <location>
        <begin position="177"/>
        <end position="184"/>
    </location>
    <ligand>
        <name>ATP</name>
        <dbReference type="ChEBI" id="CHEBI:30616"/>
    </ligand>
</feature>
<evidence type="ECO:0000255" key="1">
    <source>
        <dbReference type="HAMAP-Rule" id="MF_01821"/>
    </source>
</evidence>
<dbReference type="EC" id="3.6.4.-" evidence="1"/>
<dbReference type="EMBL" id="CP000058">
    <property type="protein sequence ID" value="AAZ36141.1"/>
    <property type="molecule type" value="Genomic_DNA"/>
</dbReference>
<dbReference type="RefSeq" id="WP_011168038.1">
    <property type="nucleotide sequence ID" value="NC_005773.3"/>
</dbReference>
<dbReference type="SMR" id="Q48LP5"/>
<dbReference type="KEGG" id="psp:PSPPH_1421"/>
<dbReference type="eggNOG" id="COG0553">
    <property type="taxonomic scope" value="Bacteria"/>
</dbReference>
<dbReference type="HOGENOM" id="CLU_011520_0_0_6"/>
<dbReference type="Proteomes" id="UP000000551">
    <property type="component" value="Chromosome"/>
</dbReference>
<dbReference type="GO" id="GO:0005524">
    <property type="term" value="F:ATP binding"/>
    <property type="evidence" value="ECO:0007669"/>
    <property type="project" value="UniProtKB-UniRule"/>
</dbReference>
<dbReference type="GO" id="GO:0003677">
    <property type="term" value="F:DNA binding"/>
    <property type="evidence" value="ECO:0007669"/>
    <property type="project" value="UniProtKB-KW"/>
</dbReference>
<dbReference type="GO" id="GO:0004386">
    <property type="term" value="F:helicase activity"/>
    <property type="evidence" value="ECO:0007669"/>
    <property type="project" value="UniProtKB-UniRule"/>
</dbReference>
<dbReference type="GO" id="GO:0016817">
    <property type="term" value="F:hydrolase activity, acting on acid anhydrides"/>
    <property type="evidence" value="ECO:0007669"/>
    <property type="project" value="InterPro"/>
</dbReference>
<dbReference type="GO" id="GO:0006355">
    <property type="term" value="P:regulation of DNA-templated transcription"/>
    <property type="evidence" value="ECO:0007669"/>
    <property type="project" value="UniProtKB-UniRule"/>
</dbReference>
<dbReference type="CDD" id="cd18011">
    <property type="entry name" value="DEXDc_RapA"/>
    <property type="match status" value="1"/>
</dbReference>
<dbReference type="CDD" id="cd18793">
    <property type="entry name" value="SF2_C_SNF"/>
    <property type="match status" value="1"/>
</dbReference>
<dbReference type="Gene3D" id="2.30.30.140">
    <property type="match status" value="1"/>
</dbReference>
<dbReference type="Gene3D" id="2.30.30.930">
    <property type="match status" value="1"/>
</dbReference>
<dbReference type="Gene3D" id="3.30.360.80">
    <property type="match status" value="1"/>
</dbReference>
<dbReference type="Gene3D" id="6.10.140.1500">
    <property type="match status" value="1"/>
</dbReference>
<dbReference type="Gene3D" id="6.10.140.2230">
    <property type="match status" value="1"/>
</dbReference>
<dbReference type="Gene3D" id="3.40.50.300">
    <property type="entry name" value="P-loop containing nucleotide triphosphate hydrolases"/>
    <property type="match status" value="1"/>
</dbReference>
<dbReference type="Gene3D" id="3.40.50.10810">
    <property type="entry name" value="Tandem AAA-ATPase domain"/>
    <property type="match status" value="1"/>
</dbReference>
<dbReference type="HAMAP" id="MF_01821">
    <property type="entry name" value="Helicase_RapA"/>
    <property type="match status" value="1"/>
</dbReference>
<dbReference type="InterPro" id="IPR014001">
    <property type="entry name" value="Helicase_ATP-bd"/>
</dbReference>
<dbReference type="InterPro" id="IPR001650">
    <property type="entry name" value="Helicase_C-like"/>
</dbReference>
<dbReference type="InterPro" id="IPR023949">
    <property type="entry name" value="Helicase_RapA"/>
</dbReference>
<dbReference type="InterPro" id="IPR027417">
    <property type="entry name" value="P-loop_NTPase"/>
</dbReference>
<dbReference type="InterPro" id="IPR022737">
    <property type="entry name" value="RapA_C"/>
</dbReference>
<dbReference type="InterPro" id="IPR038718">
    <property type="entry name" value="SNF2-like_sf"/>
</dbReference>
<dbReference type="InterPro" id="IPR049730">
    <property type="entry name" value="SNF2/RAD54-like_C"/>
</dbReference>
<dbReference type="InterPro" id="IPR000330">
    <property type="entry name" value="SNF2_N"/>
</dbReference>
<dbReference type="InterPro" id="IPR040765">
    <property type="entry name" value="Tudor_1_RapA"/>
</dbReference>
<dbReference type="InterPro" id="IPR040766">
    <property type="entry name" value="Tudor_2_RapA"/>
</dbReference>
<dbReference type="NCBIfam" id="NF003426">
    <property type="entry name" value="PRK04914.1"/>
    <property type="match status" value="1"/>
</dbReference>
<dbReference type="PANTHER" id="PTHR45766">
    <property type="entry name" value="DNA ANNEALING HELICASE AND ENDONUCLEASE ZRANB3 FAMILY MEMBER"/>
    <property type="match status" value="1"/>
</dbReference>
<dbReference type="PANTHER" id="PTHR45766:SF6">
    <property type="entry name" value="SWI_SNF-RELATED MATRIX-ASSOCIATED ACTIN-DEPENDENT REGULATOR OF CHROMATIN SUBFAMILY A-LIKE PROTEIN 1"/>
    <property type="match status" value="1"/>
</dbReference>
<dbReference type="Pfam" id="PF00271">
    <property type="entry name" value="Helicase_C"/>
    <property type="match status" value="1"/>
</dbReference>
<dbReference type="Pfam" id="PF12137">
    <property type="entry name" value="RapA_C"/>
    <property type="match status" value="1"/>
</dbReference>
<dbReference type="Pfam" id="PF00176">
    <property type="entry name" value="SNF2-rel_dom"/>
    <property type="match status" value="1"/>
</dbReference>
<dbReference type="Pfam" id="PF18339">
    <property type="entry name" value="Tudor_1_RapA"/>
    <property type="match status" value="1"/>
</dbReference>
<dbReference type="Pfam" id="PF18337">
    <property type="entry name" value="Tudor_RapA"/>
    <property type="match status" value="1"/>
</dbReference>
<dbReference type="SMART" id="SM00487">
    <property type="entry name" value="DEXDc"/>
    <property type="match status" value="1"/>
</dbReference>
<dbReference type="SMART" id="SM00490">
    <property type="entry name" value="HELICc"/>
    <property type="match status" value="1"/>
</dbReference>
<dbReference type="SUPFAM" id="SSF52540">
    <property type="entry name" value="P-loop containing nucleoside triphosphate hydrolases"/>
    <property type="match status" value="2"/>
</dbReference>
<dbReference type="PROSITE" id="PS51192">
    <property type="entry name" value="HELICASE_ATP_BIND_1"/>
    <property type="match status" value="1"/>
</dbReference>
<dbReference type="PROSITE" id="PS51194">
    <property type="entry name" value="HELICASE_CTER"/>
    <property type="match status" value="1"/>
</dbReference>